<accession>Q54WT6</accession>
<reference key="1">
    <citation type="journal article" date="2005" name="Nature">
        <title>The genome of the social amoeba Dictyostelium discoideum.</title>
        <authorList>
            <person name="Eichinger L."/>
            <person name="Pachebat J.A."/>
            <person name="Gloeckner G."/>
            <person name="Rajandream M.A."/>
            <person name="Sucgang R."/>
            <person name="Berriman M."/>
            <person name="Song J."/>
            <person name="Olsen R."/>
            <person name="Szafranski K."/>
            <person name="Xu Q."/>
            <person name="Tunggal B."/>
            <person name="Kummerfeld S."/>
            <person name="Madera M."/>
            <person name="Konfortov B.A."/>
            <person name="Rivero F."/>
            <person name="Bankier A.T."/>
            <person name="Lehmann R."/>
            <person name="Hamlin N."/>
            <person name="Davies R."/>
            <person name="Gaudet P."/>
            <person name="Fey P."/>
            <person name="Pilcher K."/>
            <person name="Chen G."/>
            <person name="Saunders D."/>
            <person name="Sodergren E.J."/>
            <person name="Davis P."/>
            <person name="Kerhornou A."/>
            <person name="Nie X."/>
            <person name="Hall N."/>
            <person name="Anjard C."/>
            <person name="Hemphill L."/>
            <person name="Bason N."/>
            <person name="Farbrother P."/>
            <person name="Desany B."/>
            <person name="Just E."/>
            <person name="Morio T."/>
            <person name="Rost R."/>
            <person name="Churcher C.M."/>
            <person name="Cooper J."/>
            <person name="Haydock S."/>
            <person name="van Driessche N."/>
            <person name="Cronin A."/>
            <person name="Goodhead I."/>
            <person name="Muzny D.M."/>
            <person name="Mourier T."/>
            <person name="Pain A."/>
            <person name="Lu M."/>
            <person name="Harper D."/>
            <person name="Lindsay R."/>
            <person name="Hauser H."/>
            <person name="James K.D."/>
            <person name="Quiles M."/>
            <person name="Madan Babu M."/>
            <person name="Saito T."/>
            <person name="Buchrieser C."/>
            <person name="Wardroper A."/>
            <person name="Felder M."/>
            <person name="Thangavelu M."/>
            <person name="Johnson D."/>
            <person name="Knights A."/>
            <person name="Loulseged H."/>
            <person name="Mungall K.L."/>
            <person name="Oliver K."/>
            <person name="Price C."/>
            <person name="Quail M.A."/>
            <person name="Urushihara H."/>
            <person name="Hernandez J."/>
            <person name="Rabbinowitsch E."/>
            <person name="Steffen D."/>
            <person name="Sanders M."/>
            <person name="Ma J."/>
            <person name="Kohara Y."/>
            <person name="Sharp S."/>
            <person name="Simmonds M.N."/>
            <person name="Spiegler S."/>
            <person name="Tivey A."/>
            <person name="Sugano S."/>
            <person name="White B."/>
            <person name="Walker D."/>
            <person name="Woodward J.R."/>
            <person name="Winckler T."/>
            <person name="Tanaka Y."/>
            <person name="Shaulsky G."/>
            <person name="Schleicher M."/>
            <person name="Weinstock G.M."/>
            <person name="Rosenthal A."/>
            <person name="Cox E.C."/>
            <person name="Chisholm R.L."/>
            <person name="Gibbs R.A."/>
            <person name="Loomis W.F."/>
            <person name="Platzer M."/>
            <person name="Kay R.R."/>
            <person name="Williams J.G."/>
            <person name="Dear P.H."/>
            <person name="Noegel A.A."/>
            <person name="Barrell B.G."/>
            <person name="Kuspa A."/>
        </authorList>
    </citation>
    <scope>NUCLEOTIDE SEQUENCE [LARGE SCALE GENOMIC DNA]</scope>
    <source>
        <strain>AX4</strain>
    </source>
</reference>
<gene>
    <name type="primary">hspJ</name>
    <name type="ORF">DDB_G0279447</name>
</gene>
<name>HSPJ_DICDI</name>
<protein>
    <recommendedName>
        <fullName>Small heat shock protein hspJ</fullName>
    </recommendedName>
</protein>
<sequence length="161" mass="18903">MSCSIILPNLINFINNDNNNIFEKNNEIQKQQQEEENKSNQVNNILNSIIESKFTSLNPKLKIQETPNQYQIKALIPLNFNKEEISVNVKNNRLIISAFKEIKFENQEKTKLTKFEKYQKTINVSNKNLDFSSIKAQFKDNTLTITIFKQSFEKEIKINIE</sequence>
<keyword id="KW-1185">Reference proteome</keyword>
<keyword id="KW-0346">Stress response</keyword>
<proteinExistence type="inferred from homology"/>
<dbReference type="EMBL" id="AAFI02000031">
    <property type="protein sequence ID" value="EAL67662.1"/>
    <property type="molecule type" value="Genomic_DNA"/>
</dbReference>
<dbReference type="RefSeq" id="XP_641631.1">
    <property type="nucleotide sequence ID" value="XM_636539.1"/>
</dbReference>
<dbReference type="SMR" id="Q54WT6"/>
<dbReference type="PaxDb" id="44689-DDB0232121"/>
<dbReference type="EnsemblProtists" id="EAL67662">
    <property type="protein sequence ID" value="EAL67662"/>
    <property type="gene ID" value="DDB_G0279447"/>
</dbReference>
<dbReference type="GeneID" id="8622037"/>
<dbReference type="KEGG" id="ddi:DDB_G0279447"/>
<dbReference type="dictyBase" id="DDB_G0279447">
    <property type="gene designation" value="hspJ"/>
</dbReference>
<dbReference type="VEuPathDB" id="AmoebaDB:DDB_G0279447"/>
<dbReference type="eggNOG" id="ENOG502RI6Z">
    <property type="taxonomic scope" value="Eukaryota"/>
</dbReference>
<dbReference type="HOGENOM" id="CLU_1646848_0_0_1"/>
<dbReference type="InParanoid" id="Q54WT6"/>
<dbReference type="OMA" id="REEPNNN"/>
<dbReference type="PRO" id="PR:Q54WT6"/>
<dbReference type="Proteomes" id="UP000002195">
    <property type="component" value="Chromosome 3"/>
</dbReference>
<dbReference type="CDD" id="cd06464">
    <property type="entry name" value="ACD_sHsps-like"/>
    <property type="match status" value="1"/>
</dbReference>
<dbReference type="Gene3D" id="2.60.40.790">
    <property type="match status" value="1"/>
</dbReference>
<dbReference type="InterPro" id="IPR002068">
    <property type="entry name" value="A-crystallin/Hsp20_dom"/>
</dbReference>
<dbReference type="InterPro" id="IPR008978">
    <property type="entry name" value="HSP20-like_chaperone"/>
</dbReference>
<dbReference type="Pfam" id="PF00011">
    <property type="entry name" value="HSP20"/>
    <property type="match status" value="1"/>
</dbReference>
<dbReference type="SUPFAM" id="SSF49764">
    <property type="entry name" value="HSP20-like chaperones"/>
    <property type="match status" value="1"/>
</dbReference>
<dbReference type="PROSITE" id="PS01031">
    <property type="entry name" value="SHSP"/>
    <property type="match status" value="1"/>
</dbReference>
<organism>
    <name type="scientific">Dictyostelium discoideum</name>
    <name type="common">Social amoeba</name>
    <dbReference type="NCBI Taxonomy" id="44689"/>
    <lineage>
        <taxon>Eukaryota</taxon>
        <taxon>Amoebozoa</taxon>
        <taxon>Evosea</taxon>
        <taxon>Eumycetozoa</taxon>
        <taxon>Dictyostelia</taxon>
        <taxon>Dictyosteliales</taxon>
        <taxon>Dictyosteliaceae</taxon>
        <taxon>Dictyostelium</taxon>
    </lineage>
</organism>
<feature type="chain" id="PRO_0000363906" description="Small heat shock protein hspJ">
    <location>
        <begin position="1"/>
        <end position="161"/>
    </location>
</feature>
<feature type="domain" description="sHSP" evidence="1">
    <location>
        <begin position="52"/>
        <end position="161"/>
    </location>
</feature>
<evidence type="ECO:0000255" key="1">
    <source>
        <dbReference type="PROSITE-ProRule" id="PRU00285"/>
    </source>
</evidence>
<comment type="similarity">
    <text evidence="1">Belongs to the small heat shock protein (HSP20) family.</text>
</comment>